<dbReference type="EC" id="6.3.1.13" evidence="1"/>
<dbReference type="EMBL" id="CP001630">
    <property type="protein sequence ID" value="ACU36143.1"/>
    <property type="molecule type" value="Genomic_DNA"/>
</dbReference>
<dbReference type="RefSeq" id="WP_015801032.1">
    <property type="nucleotide sequence ID" value="NC_013093.1"/>
</dbReference>
<dbReference type="SMR" id="C6WIA0"/>
<dbReference type="STRING" id="446462.Amir_2201"/>
<dbReference type="KEGG" id="ami:Amir_2201"/>
<dbReference type="eggNOG" id="COG0215">
    <property type="taxonomic scope" value="Bacteria"/>
</dbReference>
<dbReference type="HOGENOM" id="CLU_013528_0_0_11"/>
<dbReference type="OrthoDB" id="9815130at2"/>
<dbReference type="Proteomes" id="UP000002213">
    <property type="component" value="Chromosome"/>
</dbReference>
<dbReference type="GO" id="GO:0005829">
    <property type="term" value="C:cytosol"/>
    <property type="evidence" value="ECO:0007669"/>
    <property type="project" value="TreeGrafter"/>
</dbReference>
<dbReference type="GO" id="GO:0005524">
    <property type="term" value="F:ATP binding"/>
    <property type="evidence" value="ECO:0007669"/>
    <property type="project" value="UniProtKB-KW"/>
</dbReference>
<dbReference type="GO" id="GO:0035446">
    <property type="term" value="F:cysteine-glucosaminylinositol ligase activity"/>
    <property type="evidence" value="ECO:0007669"/>
    <property type="project" value="UniProtKB-UniRule"/>
</dbReference>
<dbReference type="GO" id="GO:0004817">
    <property type="term" value="F:cysteine-tRNA ligase activity"/>
    <property type="evidence" value="ECO:0007669"/>
    <property type="project" value="TreeGrafter"/>
</dbReference>
<dbReference type="GO" id="GO:0008270">
    <property type="term" value="F:zinc ion binding"/>
    <property type="evidence" value="ECO:0007669"/>
    <property type="project" value="UniProtKB-UniRule"/>
</dbReference>
<dbReference type="GO" id="GO:0006423">
    <property type="term" value="P:cysteinyl-tRNA aminoacylation"/>
    <property type="evidence" value="ECO:0007669"/>
    <property type="project" value="TreeGrafter"/>
</dbReference>
<dbReference type="GO" id="GO:0010125">
    <property type="term" value="P:mycothiol biosynthetic process"/>
    <property type="evidence" value="ECO:0007669"/>
    <property type="project" value="UniProtKB-UniRule"/>
</dbReference>
<dbReference type="CDD" id="cd07955">
    <property type="entry name" value="Anticodon_Ia_Cys_like"/>
    <property type="match status" value="1"/>
</dbReference>
<dbReference type="FunFam" id="3.40.50.620:FF:000134">
    <property type="entry name" value="L-cysteine:1D-myo-inositol 2-amino-2-deoxy-alpha-D-glucopyranoside ligase"/>
    <property type="match status" value="1"/>
</dbReference>
<dbReference type="Gene3D" id="1.20.120.640">
    <property type="entry name" value="Anticodon-binding domain of a subclass of class I aminoacyl-tRNA synthetases"/>
    <property type="match status" value="1"/>
</dbReference>
<dbReference type="Gene3D" id="3.40.50.620">
    <property type="entry name" value="HUPs"/>
    <property type="match status" value="1"/>
</dbReference>
<dbReference type="HAMAP" id="MF_01697">
    <property type="entry name" value="MshC"/>
    <property type="match status" value="1"/>
</dbReference>
<dbReference type="InterPro" id="IPR024909">
    <property type="entry name" value="Cys-tRNA/MSH_ligase"/>
</dbReference>
<dbReference type="InterPro" id="IPR017812">
    <property type="entry name" value="Mycothiol_ligase_MshC"/>
</dbReference>
<dbReference type="InterPro" id="IPR014729">
    <property type="entry name" value="Rossmann-like_a/b/a_fold"/>
</dbReference>
<dbReference type="InterPro" id="IPR032678">
    <property type="entry name" value="tRNA-synt_1_cat_dom"/>
</dbReference>
<dbReference type="NCBIfam" id="TIGR03447">
    <property type="entry name" value="mycothiol_MshC"/>
    <property type="match status" value="1"/>
</dbReference>
<dbReference type="PANTHER" id="PTHR10890:SF3">
    <property type="entry name" value="CYSTEINE--TRNA LIGASE, CYTOPLASMIC"/>
    <property type="match status" value="1"/>
</dbReference>
<dbReference type="PANTHER" id="PTHR10890">
    <property type="entry name" value="CYSTEINYL-TRNA SYNTHETASE"/>
    <property type="match status" value="1"/>
</dbReference>
<dbReference type="Pfam" id="PF01406">
    <property type="entry name" value="tRNA-synt_1e"/>
    <property type="match status" value="1"/>
</dbReference>
<dbReference type="PRINTS" id="PR00983">
    <property type="entry name" value="TRNASYNTHCYS"/>
</dbReference>
<dbReference type="SUPFAM" id="SSF52374">
    <property type="entry name" value="Nucleotidylyl transferase"/>
    <property type="match status" value="1"/>
</dbReference>
<accession>C6WIA0</accession>
<feature type="chain" id="PRO_0000400427" description="L-cysteine:1D-myo-inositol 2-amino-2-deoxy-alpha-D-glucopyranoside ligase">
    <location>
        <begin position="1"/>
        <end position="412"/>
    </location>
</feature>
<feature type="region of interest" description="Disordered" evidence="2">
    <location>
        <begin position="1"/>
        <end position="30"/>
    </location>
</feature>
<feature type="short sequence motif" description="'HIGH' region" evidence="1">
    <location>
        <begin position="45"/>
        <end position="55"/>
    </location>
</feature>
<feature type="short sequence motif" description="'ERGGDP' region" evidence="1">
    <location>
        <begin position="187"/>
        <end position="192"/>
    </location>
</feature>
<feature type="short sequence motif" description="'KMSKS' region" evidence="1">
    <location>
        <begin position="289"/>
        <end position="293"/>
    </location>
</feature>
<feature type="binding site" evidence="1">
    <location>
        <begin position="43"/>
        <end position="46"/>
    </location>
    <ligand>
        <name>L-cysteinyl-5'-AMP</name>
        <dbReference type="ChEBI" id="CHEBI:144924"/>
    </ligand>
</feature>
<feature type="binding site" evidence="1">
    <location>
        <position position="43"/>
    </location>
    <ligand>
        <name>Zn(2+)</name>
        <dbReference type="ChEBI" id="CHEBI:29105"/>
    </ligand>
</feature>
<feature type="binding site" evidence="1">
    <location>
        <position position="58"/>
    </location>
    <ligand>
        <name>L-cysteinyl-5'-AMP</name>
        <dbReference type="ChEBI" id="CHEBI:144924"/>
    </ligand>
</feature>
<feature type="binding site" evidence="1">
    <location>
        <begin position="81"/>
        <end position="83"/>
    </location>
    <ligand>
        <name>L-cysteinyl-5'-AMP</name>
        <dbReference type="ChEBI" id="CHEBI:144924"/>
    </ligand>
</feature>
<feature type="binding site" evidence="1">
    <location>
        <position position="227"/>
    </location>
    <ligand>
        <name>L-cysteinyl-5'-AMP</name>
        <dbReference type="ChEBI" id="CHEBI:144924"/>
    </ligand>
</feature>
<feature type="binding site" evidence="1">
    <location>
        <position position="231"/>
    </location>
    <ligand>
        <name>Zn(2+)</name>
        <dbReference type="ChEBI" id="CHEBI:29105"/>
    </ligand>
</feature>
<feature type="binding site" evidence="1">
    <location>
        <begin position="249"/>
        <end position="251"/>
    </location>
    <ligand>
        <name>L-cysteinyl-5'-AMP</name>
        <dbReference type="ChEBI" id="CHEBI:144924"/>
    </ligand>
</feature>
<feature type="binding site" evidence="1">
    <location>
        <position position="256"/>
    </location>
    <ligand>
        <name>Zn(2+)</name>
        <dbReference type="ChEBI" id="CHEBI:29105"/>
    </ligand>
</feature>
<feature type="binding site" evidence="1">
    <location>
        <position position="283"/>
    </location>
    <ligand>
        <name>L-cysteinyl-5'-AMP</name>
        <dbReference type="ChEBI" id="CHEBI:144924"/>
    </ligand>
</feature>
<organism>
    <name type="scientific">Actinosynnema mirum (strain ATCC 29888 / DSM 43827 / JCM 3225 / NBRC 14064 / NCIMB 13271 / NRRL B-12336 / IMRU 3971 / 101)</name>
    <dbReference type="NCBI Taxonomy" id="446462"/>
    <lineage>
        <taxon>Bacteria</taxon>
        <taxon>Bacillati</taxon>
        <taxon>Actinomycetota</taxon>
        <taxon>Actinomycetes</taxon>
        <taxon>Pseudonocardiales</taxon>
        <taxon>Pseudonocardiaceae</taxon>
        <taxon>Actinosynnema</taxon>
    </lineage>
</organism>
<keyword id="KW-0067">ATP-binding</keyword>
<keyword id="KW-0436">Ligase</keyword>
<keyword id="KW-0479">Metal-binding</keyword>
<keyword id="KW-0547">Nucleotide-binding</keyword>
<keyword id="KW-1185">Reference proteome</keyword>
<keyword id="KW-0862">Zinc</keyword>
<proteinExistence type="inferred from homology"/>
<comment type="function">
    <text evidence="1">Catalyzes the ATP-dependent condensation of GlcN-Ins and L-cysteine to form L-Cys-GlcN-Ins.</text>
</comment>
<comment type="catalytic activity">
    <reaction evidence="1">
        <text>1D-myo-inositol 2-amino-2-deoxy-alpha-D-glucopyranoside + L-cysteine + ATP = 1D-myo-inositol 2-(L-cysteinylamino)-2-deoxy-alpha-D-glucopyranoside + AMP + diphosphate + H(+)</text>
        <dbReference type="Rhea" id="RHEA:26176"/>
        <dbReference type="ChEBI" id="CHEBI:15378"/>
        <dbReference type="ChEBI" id="CHEBI:30616"/>
        <dbReference type="ChEBI" id="CHEBI:33019"/>
        <dbReference type="ChEBI" id="CHEBI:35235"/>
        <dbReference type="ChEBI" id="CHEBI:58886"/>
        <dbReference type="ChEBI" id="CHEBI:58887"/>
        <dbReference type="ChEBI" id="CHEBI:456215"/>
        <dbReference type="EC" id="6.3.1.13"/>
    </reaction>
</comment>
<comment type="cofactor">
    <cofactor evidence="1">
        <name>Zn(2+)</name>
        <dbReference type="ChEBI" id="CHEBI:29105"/>
    </cofactor>
    <text evidence="1">Binds 1 zinc ion per subunit.</text>
</comment>
<comment type="subunit">
    <text evidence="1">Monomer.</text>
</comment>
<comment type="similarity">
    <text evidence="1">Belongs to the class-I aminoacyl-tRNA synthetase family. MshC subfamily.</text>
</comment>
<name>MSHC_ACTMD</name>
<protein>
    <recommendedName>
        <fullName evidence="1">L-cysteine:1D-myo-inositol 2-amino-2-deoxy-alpha-D-glucopyranoside ligase</fullName>
        <shortName evidence="1">L-Cys:GlcN-Ins ligase</shortName>
        <ecNumber evidence="1">6.3.1.13</ecNumber>
    </recommendedName>
    <alternativeName>
        <fullName evidence="1">Mycothiol ligase</fullName>
        <shortName evidence="1">MSH ligase</shortName>
    </alternativeName>
</protein>
<sequence>MQTWSSPSVPKLRGAPRPLRLHDTATGEVRPTAPGDTARLYVCGITPYDATHLGHAATYLAFDLVQRVWLDNGHDVHYVQNVTDVDDPLLERAARDQDDWVVLAMRETALFREDMEALRVLAPREYVGAVESIPGIVDMIEKLLASGAAYRLDDDEYPDVYFPHDATPNFGYESNYDRETMLRLFAERGGDPDRPGKRDPLDALLWRMARPGEPSWETSIGTGRPGWHIECSHIALANLDTPFDLQGGGSDLVFPHHEYSAAHAEALTGQHPFARHYAHAGMIGLDGEKMSKSRGNLVFVSKLRSTGVDPGVIRLALFAGHYREDRPWTDELFAEAGTRLALWRSAADLESGPSVDDVVARVREHLGNDLDTPKALAALDAWAREAWDRGGPDTEAPGVFRTAVDALLGIAL</sequence>
<reference key="1">
    <citation type="journal article" date="2009" name="Stand. Genomic Sci.">
        <title>Complete genome sequence of Actinosynnema mirum type strain (101).</title>
        <authorList>
            <person name="Land M."/>
            <person name="Lapidus A."/>
            <person name="Mayilraj S."/>
            <person name="Chen F."/>
            <person name="Copeland A."/>
            <person name="Del Rio T.G."/>
            <person name="Nolan M."/>
            <person name="Lucas S."/>
            <person name="Tice H."/>
            <person name="Cheng J.F."/>
            <person name="Chertkov O."/>
            <person name="Bruce D."/>
            <person name="Goodwin L."/>
            <person name="Pitluck S."/>
            <person name="Rohde M."/>
            <person name="Goker M."/>
            <person name="Pati A."/>
            <person name="Ivanova N."/>
            <person name="Mavromatis K."/>
            <person name="Chen A."/>
            <person name="Palaniappan K."/>
            <person name="Hauser L."/>
            <person name="Chang Y.J."/>
            <person name="Jeffries C.C."/>
            <person name="Brettin T."/>
            <person name="Detter J.C."/>
            <person name="Han C."/>
            <person name="Chain P."/>
            <person name="Tindall B.J."/>
            <person name="Bristow J."/>
            <person name="Eisen J.A."/>
            <person name="Markowitz V."/>
            <person name="Hugenholtz P."/>
            <person name="Kyrpides N.C."/>
            <person name="Klenk H.P."/>
        </authorList>
    </citation>
    <scope>NUCLEOTIDE SEQUENCE [LARGE SCALE GENOMIC DNA]</scope>
    <source>
        <strain>ATCC 29888 / DSM 43827 / JCM 3225 / NBRC 14064 / NCIMB 13271 / NRRL B-12336 / IMRU 3971 / 101</strain>
    </source>
</reference>
<gene>
    <name evidence="1" type="primary">mshC</name>
    <name type="ordered locus">Amir_2201</name>
</gene>
<evidence type="ECO:0000255" key="1">
    <source>
        <dbReference type="HAMAP-Rule" id="MF_01697"/>
    </source>
</evidence>
<evidence type="ECO:0000256" key="2">
    <source>
        <dbReference type="SAM" id="MobiDB-lite"/>
    </source>
</evidence>